<sequence length="246" mass="26943">MSYVEQYYESISRLLRQTVDEGEEVLGKAADIMVHAIKEGKSLYLFGASHAGIIAEDAFYRAGGLALFNPIFSPALMLNVEPITLTSKLERLEGYGTILLESKPVKQGDVLFIHSVSGRNPVAIDMAIAAKQKGMTVISLTNVSYSKSVESRHSSGKRLFEVSDLVMDNHGEPGDAAVSVKSLSQKVAPTSTIVGSFIIHSIVLKMIEQLEEAGREVPVFRSANLDGGDAYNEAMMERHKHQIHYM</sequence>
<dbReference type="EMBL" id="AP006627">
    <property type="protein sequence ID" value="BAD63426.1"/>
    <property type="molecule type" value="Genomic_DNA"/>
</dbReference>
<dbReference type="RefSeq" id="WP_011245742.1">
    <property type="nucleotide sequence ID" value="NC_006582.1"/>
</dbReference>
<dbReference type="SMR" id="Q5WJM9"/>
<dbReference type="STRING" id="66692.ABC0887"/>
<dbReference type="KEGG" id="bcl:ABC0887"/>
<dbReference type="eggNOG" id="COG4821">
    <property type="taxonomic scope" value="Bacteria"/>
</dbReference>
<dbReference type="HOGENOM" id="CLU_089975_0_0_9"/>
<dbReference type="OrthoDB" id="9805185at2"/>
<dbReference type="Proteomes" id="UP000001168">
    <property type="component" value="Chromosome"/>
</dbReference>
<dbReference type="GO" id="GO:0097367">
    <property type="term" value="F:carbohydrate derivative binding"/>
    <property type="evidence" value="ECO:0007669"/>
    <property type="project" value="InterPro"/>
</dbReference>
<dbReference type="GO" id="GO:1901135">
    <property type="term" value="P:carbohydrate derivative metabolic process"/>
    <property type="evidence" value="ECO:0007669"/>
    <property type="project" value="InterPro"/>
</dbReference>
<dbReference type="CDD" id="cd05013">
    <property type="entry name" value="SIS_RpiR"/>
    <property type="match status" value="1"/>
</dbReference>
<dbReference type="Gene3D" id="3.40.50.10490">
    <property type="entry name" value="Glucose-6-phosphate isomerase like protein, domain 1"/>
    <property type="match status" value="1"/>
</dbReference>
<dbReference type="HAMAP" id="MF_01240">
    <property type="entry name" value="UPF0309"/>
    <property type="match status" value="1"/>
</dbReference>
<dbReference type="InterPro" id="IPR035472">
    <property type="entry name" value="RpiR-like_SIS"/>
</dbReference>
<dbReference type="InterPro" id="IPR001347">
    <property type="entry name" value="SIS_dom"/>
</dbReference>
<dbReference type="InterPro" id="IPR046348">
    <property type="entry name" value="SIS_dom_sf"/>
</dbReference>
<dbReference type="InterPro" id="IPR050099">
    <property type="entry name" value="SIS_GmhA/DiaA_subfam"/>
</dbReference>
<dbReference type="InterPro" id="IPR022951">
    <property type="entry name" value="UPF0309"/>
</dbReference>
<dbReference type="NCBIfam" id="NF002805">
    <property type="entry name" value="PRK02947.1"/>
    <property type="match status" value="1"/>
</dbReference>
<dbReference type="PANTHER" id="PTHR30390:SF7">
    <property type="entry name" value="PHOSPHOHEPTOSE ISOMERASE"/>
    <property type="match status" value="1"/>
</dbReference>
<dbReference type="PANTHER" id="PTHR30390">
    <property type="entry name" value="SEDOHEPTULOSE 7-PHOSPHATE ISOMERASE / DNAA INITIATOR-ASSOCIATING FACTOR FOR REPLICATION INITIATION"/>
    <property type="match status" value="1"/>
</dbReference>
<dbReference type="Pfam" id="PF13580">
    <property type="entry name" value="SIS_2"/>
    <property type="match status" value="1"/>
</dbReference>
<dbReference type="SUPFAM" id="SSF53697">
    <property type="entry name" value="SIS domain"/>
    <property type="match status" value="1"/>
</dbReference>
<dbReference type="PROSITE" id="PS51464">
    <property type="entry name" value="SIS"/>
    <property type="match status" value="1"/>
</dbReference>
<proteinExistence type="inferred from homology"/>
<feature type="chain" id="PRO_1000066940" description="UPF0309 protein ABC0887">
    <location>
        <begin position="1"/>
        <end position="246"/>
    </location>
</feature>
<feature type="domain" description="SIS" evidence="1">
    <location>
        <begin position="33"/>
        <end position="212"/>
    </location>
</feature>
<reference key="1">
    <citation type="submission" date="2003-10" db="EMBL/GenBank/DDBJ databases">
        <title>The complete genome sequence of the alkaliphilic Bacillus clausii KSM-K16.</title>
        <authorList>
            <person name="Takaki Y."/>
            <person name="Kageyama Y."/>
            <person name="Shimamura S."/>
            <person name="Suzuki H."/>
            <person name="Nishi S."/>
            <person name="Hatada Y."/>
            <person name="Kawai S."/>
            <person name="Ito S."/>
            <person name="Horikoshi K."/>
        </authorList>
    </citation>
    <scope>NUCLEOTIDE SEQUENCE [LARGE SCALE GENOMIC DNA]</scope>
    <source>
        <strain>KSM-K16</strain>
    </source>
</reference>
<keyword id="KW-1185">Reference proteome</keyword>
<accession>Q5WJM9</accession>
<gene>
    <name type="ordered locus">ABC0887</name>
</gene>
<name>Y887_SHOC1</name>
<organism>
    <name type="scientific">Shouchella clausii (strain KSM-K16)</name>
    <name type="common">Alkalihalobacillus clausii</name>
    <dbReference type="NCBI Taxonomy" id="66692"/>
    <lineage>
        <taxon>Bacteria</taxon>
        <taxon>Bacillati</taxon>
        <taxon>Bacillota</taxon>
        <taxon>Bacilli</taxon>
        <taxon>Bacillales</taxon>
        <taxon>Bacillaceae</taxon>
        <taxon>Shouchella</taxon>
    </lineage>
</organism>
<evidence type="ECO:0000255" key="1">
    <source>
        <dbReference type="HAMAP-Rule" id="MF_01240"/>
    </source>
</evidence>
<comment type="similarity">
    <text evidence="1">Belongs to the UPF0309 family.</text>
</comment>
<protein>
    <recommendedName>
        <fullName evidence="1">UPF0309 protein ABC0887</fullName>
    </recommendedName>
</protein>